<reference key="1">
    <citation type="submission" date="2009-03" db="EMBL/GenBank/DDBJ databases">
        <title>Complete genome sequence of Edwardsiella ictaluri 93-146.</title>
        <authorList>
            <person name="Williams M.L."/>
            <person name="Gillaspy A.F."/>
            <person name="Dyer D.W."/>
            <person name="Thune R.L."/>
            <person name="Waldbieser G.C."/>
            <person name="Schuster S.C."/>
            <person name="Gipson J."/>
            <person name="Zaitshik J."/>
            <person name="Landry C."/>
            <person name="Lawrence M.L."/>
        </authorList>
    </citation>
    <scope>NUCLEOTIDE SEQUENCE [LARGE SCALE GENOMIC DNA]</scope>
    <source>
        <strain>93-146</strain>
    </source>
</reference>
<comment type="function">
    <text evidence="1">Specifically catalyzes the cleavage of the D-lactyl ether substituent of MurNAc 6-phosphate, producing GlcNAc 6-phosphate and D-lactate. Together with AnmK, is also required for the utilization of anhydro-N-acetylmuramic acid (anhMurNAc) either imported from the medium or derived from its own cell wall murein, and thus plays a role in cell wall recycling.</text>
</comment>
<comment type="catalytic activity">
    <reaction evidence="1">
        <text>N-acetyl-D-muramate 6-phosphate + H2O = N-acetyl-D-glucosamine 6-phosphate + (R)-lactate</text>
        <dbReference type="Rhea" id="RHEA:26410"/>
        <dbReference type="ChEBI" id="CHEBI:15377"/>
        <dbReference type="ChEBI" id="CHEBI:16004"/>
        <dbReference type="ChEBI" id="CHEBI:57513"/>
        <dbReference type="ChEBI" id="CHEBI:58722"/>
        <dbReference type="EC" id="4.2.1.126"/>
    </reaction>
</comment>
<comment type="pathway">
    <text evidence="1">Amino-sugar metabolism; N-acetylmuramate degradation.</text>
</comment>
<comment type="pathway">
    <text evidence="1">Amino-sugar metabolism; 1,6-anhydro-N-acetylmuramate degradation.</text>
</comment>
<comment type="pathway">
    <text evidence="1">Cell wall biogenesis; peptidoglycan recycling.</text>
</comment>
<comment type="subunit">
    <text evidence="1">Homodimer.</text>
</comment>
<comment type="induction">
    <text evidence="1">Induced by MurNAc 6-phosphate that releases the repressor MurR from the DNA. Repressed by MurR in the absence of MurNAc 6-phosphate.</text>
</comment>
<comment type="miscellaneous">
    <text evidence="1">A lyase-type mechanism (elimination/hydration) is suggested for the cleavage of the lactyl ether bond of MurNAc 6-phosphate, with the formation of an alpha,beta-unsaturated aldehyde intermediate with (E)-stereochemistry, followed by the syn addition of water to give product.</text>
</comment>
<comment type="similarity">
    <text evidence="1">Belongs to the GCKR-like family. MurNAc-6-P etherase subfamily.</text>
</comment>
<evidence type="ECO:0000255" key="1">
    <source>
        <dbReference type="HAMAP-Rule" id="MF_00068"/>
    </source>
</evidence>
<name>MURQ_EDWI9</name>
<accession>C5BBH3</accession>
<dbReference type="EC" id="4.2.1.126" evidence="1"/>
<dbReference type="EMBL" id="CP001600">
    <property type="protein sequence ID" value="ACR68208.1"/>
    <property type="molecule type" value="Genomic_DNA"/>
</dbReference>
<dbReference type="RefSeq" id="WP_015870389.1">
    <property type="nucleotide sequence ID" value="NZ_CP169062.1"/>
</dbReference>
<dbReference type="SMR" id="C5BBH3"/>
<dbReference type="STRING" id="67780.B6E78_15415"/>
<dbReference type="GeneID" id="69538035"/>
<dbReference type="KEGG" id="eic:NT01EI_0995"/>
<dbReference type="PATRIC" id="fig|634503.3.peg.899"/>
<dbReference type="HOGENOM" id="CLU_049049_1_1_6"/>
<dbReference type="OrthoDB" id="9813395at2"/>
<dbReference type="UniPathway" id="UPA00342"/>
<dbReference type="UniPathway" id="UPA00343"/>
<dbReference type="UniPathway" id="UPA00544"/>
<dbReference type="Proteomes" id="UP000001485">
    <property type="component" value="Chromosome"/>
</dbReference>
<dbReference type="GO" id="GO:0097367">
    <property type="term" value="F:carbohydrate derivative binding"/>
    <property type="evidence" value="ECO:0007669"/>
    <property type="project" value="InterPro"/>
</dbReference>
<dbReference type="GO" id="GO:0016835">
    <property type="term" value="F:carbon-oxygen lyase activity"/>
    <property type="evidence" value="ECO:0007669"/>
    <property type="project" value="UniProtKB-UniRule"/>
</dbReference>
<dbReference type="GO" id="GO:0016803">
    <property type="term" value="F:ether hydrolase activity"/>
    <property type="evidence" value="ECO:0007669"/>
    <property type="project" value="TreeGrafter"/>
</dbReference>
<dbReference type="GO" id="GO:0097175">
    <property type="term" value="P:1,6-anhydro-N-acetyl-beta-muramic acid catabolic process"/>
    <property type="evidence" value="ECO:0007669"/>
    <property type="project" value="UniProtKB-UniRule"/>
</dbReference>
<dbReference type="GO" id="GO:0046348">
    <property type="term" value="P:amino sugar catabolic process"/>
    <property type="evidence" value="ECO:0007669"/>
    <property type="project" value="InterPro"/>
</dbReference>
<dbReference type="GO" id="GO:0097173">
    <property type="term" value="P:N-acetylmuramic acid catabolic process"/>
    <property type="evidence" value="ECO:0007669"/>
    <property type="project" value="UniProtKB-UniPathway"/>
</dbReference>
<dbReference type="GO" id="GO:0009254">
    <property type="term" value="P:peptidoglycan turnover"/>
    <property type="evidence" value="ECO:0007669"/>
    <property type="project" value="UniProtKB-UniRule"/>
</dbReference>
<dbReference type="CDD" id="cd05007">
    <property type="entry name" value="SIS_Etherase"/>
    <property type="match status" value="1"/>
</dbReference>
<dbReference type="FunFam" id="1.10.8.1080:FF:000001">
    <property type="entry name" value="N-acetylmuramic acid 6-phosphate etherase"/>
    <property type="match status" value="1"/>
</dbReference>
<dbReference type="FunFam" id="3.40.50.10490:FF:000014">
    <property type="entry name" value="N-acetylmuramic acid 6-phosphate etherase"/>
    <property type="match status" value="1"/>
</dbReference>
<dbReference type="Gene3D" id="1.10.8.1080">
    <property type="match status" value="1"/>
</dbReference>
<dbReference type="Gene3D" id="3.40.50.10490">
    <property type="entry name" value="Glucose-6-phosphate isomerase like protein, domain 1"/>
    <property type="match status" value="1"/>
</dbReference>
<dbReference type="HAMAP" id="MF_00068">
    <property type="entry name" value="MurQ"/>
    <property type="match status" value="1"/>
</dbReference>
<dbReference type="InterPro" id="IPR005488">
    <property type="entry name" value="Etherase_MurQ"/>
</dbReference>
<dbReference type="InterPro" id="IPR005486">
    <property type="entry name" value="Glucokinase_regulatory_CS"/>
</dbReference>
<dbReference type="InterPro" id="IPR040190">
    <property type="entry name" value="MURQ/GCKR"/>
</dbReference>
<dbReference type="InterPro" id="IPR001347">
    <property type="entry name" value="SIS_dom"/>
</dbReference>
<dbReference type="InterPro" id="IPR046348">
    <property type="entry name" value="SIS_dom_sf"/>
</dbReference>
<dbReference type="NCBIfam" id="TIGR00274">
    <property type="entry name" value="N-acetylmuramic acid 6-phosphate etherase"/>
    <property type="match status" value="1"/>
</dbReference>
<dbReference type="NCBIfam" id="NF003915">
    <property type="entry name" value="PRK05441.1"/>
    <property type="match status" value="1"/>
</dbReference>
<dbReference type="NCBIfam" id="NF009222">
    <property type="entry name" value="PRK12570.1"/>
    <property type="match status" value="1"/>
</dbReference>
<dbReference type="PANTHER" id="PTHR10088">
    <property type="entry name" value="GLUCOKINASE REGULATORY PROTEIN"/>
    <property type="match status" value="1"/>
</dbReference>
<dbReference type="PANTHER" id="PTHR10088:SF4">
    <property type="entry name" value="GLUCOKINASE REGULATORY PROTEIN"/>
    <property type="match status" value="1"/>
</dbReference>
<dbReference type="Pfam" id="PF22645">
    <property type="entry name" value="GKRP_SIS_N"/>
    <property type="match status" value="1"/>
</dbReference>
<dbReference type="SUPFAM" id="SSF53697">
    <property type="entry name" value="SIS domain"/>
    <property type="match status" value="1"/>
</dbReference>
<dbReference type="PROSITE" id="PS01272">
    <property type="entry name" value="GCKR"/>
    <property type="match status" value="1"/>
</dbReference>
<dbReference type="PROSITE" id="PS51464">
    <property type="entry name" value="SIS"/>
    <property type="match status" value="1"/>
</dbReference>
<organism>
    <name type="scientific">Edwardsiella ictaluri (strain 93-146)</name>
    <dbReference type="NCBI Taxonomy" id="634503"/>
    <lineage>
        <taxon>Bacteria</taxon>
        <taxon>Pseudomonadati</taxon>
        <taxon>Pseudomonadota</taxon>
        <taxon>Gammaproteobacteria</taxon>
        <taxon>Enterobacterales</taxon>
        <taxon>Hafniaceae</taxon>
        <taxon>Edwardsiella</taxon>
    </lineage>
</organism>
<proteinExistence type="inferred from homology"/>
<sequence>MSLNLDAMMTERRNPASAAIDTLSTLDILNLINAEDSKVAPAIARILPQIAQAVDAVSAAFARQGRLIYCGAGTSGRLGILDASECPPTFGTPAGQVIGVIAGGEPAILQAVENAEDNPQAAQDDLQRLALSSRDVVVGIAASGRTPYVLGALRYARGVGATTVALSSNPDSPMAPLADILLTPIVGPEVITGSSRMKAGTAQKMILNMLSSAAMIRSGKVYGNLMVDVEATNAKLVERQIRIVMEAGECDRATAVEALERSQRQCKTAIVMVLSGLSATEAQALLERHRGFIRPALDER</sequence>
<feature type="chain" id="PRO_1000202428" description="N-acetylmuramic acid 6-phosphate etherase">
    <location>
        <begin position="1"/>
        <end position="300"/>
    </location>
</feature>
<feature type="domain" description="SIS" evidence="1">
    <location>
        <begin position="57"/>
        <end position="220"/>
    </location>
</feature>
<feature type="active site" description="Proton donor" evidence="1">
    <location>
        <position position="85"/>
    </location>
</feature>
<feature type="active site" evidence="1">
    <location>
        <position position="116"/>
    </location>
</feature>
<gene>
    <name evidence="1" type="primary">murQ</name>
    <name type="ordered locus">NT01EI_0995</name>
</gene>
<protein>
    <recommendedName>
        <fullName evidence="1">N-acetylmuramic acid 6-phosphate etherase</fullName>
        <shortName evidence="1">MurNAc-6-P etherase</shortName>
        <ecNumber evidence="1">4.2.1.126</ecNumber>
    </recommendedName>
    <alternativeName>
        <fullName evidence="1">N-acetylmuramic acid 6-phosphate hydrolase</fullName>
    </alternativeName>
    <alternativeName>
        <fullName evidence="1">N-acetylmuramic acid 6-phosphate lyase</fullName>
    </alternativeName>
</protein>
<keyword id="KW-0119">Carbohydrate metabolism</keyword>
<keyword id="KW-0456">Lyase</keyword>